<evidence type="ECO:0000255" key="1">
    <source>
        <dbReference type="HAMAP-Rule" id="MF_00081"/>
    </source>
</evidence>
<evidence type="ECO:0000305" key="2"/>
<reference key="1">
    <citation type="journal article" date="1999" name="Nat. Genet.">
        <title>Comparative genomes of Chlamydia pneumoniae and C. trachomatis.</title>
        <authorList>
            <person name="Kalman S."/>
            <person name="Mitchell W.P."/>
            <person name="Marathe R."/>
            <person name="Lammel C.J."/>
            <person name="Fan J."/>
            <person name="Hyman R.W."/>
            <person name="Olinger L."/>
            <person name="Grimwood J."/>
            <person name="Davis R.W."/>
            <person name="Stephens R.S."/>
        </authorList>
    </citation>
    <scope>NUCLEOTIDE SEQUENCE [LARGE SCALE GENOMIC DNA]</scope>
    <source>
        <strain>CWL029</strain>
    </source>
</reference>
<reference key="2">
    <citation type="journal article" date="2000" name="Nucleic Acids Res.">
        <title>Genome sequences of Chlamydia trachomatis MoPn and Chlamydia pneumoniae AR39.</title>
        <authorList>
            <person name="Read T.D."/>
            <person name="Brunham R.C."/>
            <person name="Shen C."/>
            <person name="Gill S.R."/>
            <person name="Heidelberg J.F."/>
            <person name="White O."/>
            <person name="Hickey E.K."/>
            <person name="Peterson J.D."/>
            <person name="Utterback T.R."/>
            <person name="Berry K.J."/>
            <person name="Bass S."/>
            <person name="Linher K.D."/>
            <person name="Weidman J.F."/>
            <person name="Khouri H.M."/>
            <person name="Craven B."/>
            <person name="Bowman C."/>
            <person name="Dodson R.J."/>
            <person name="Gwinn M.L."/>
            <person name="Nelson W.C."/>
            <person name="DeBoy R.T."/>
            <person name="Kolonay J.F."/>
            <person name="McClarty G."/>
            <person name="Salzberg S.L."/>
            <person name="Eisen J.A."/>
            <person name="Fraser C.M."/>
        </authorList>
    </citation>
    <scope>NUCLEOTIDE SEQUENCE [LARGE SCALE GENOMIC DNA]</scope>
    <source>
        <strain>AR39</strain>
    </source>
</reference>
<reference key="3">
    <citation type="journal article" date="2000" name="Nucleic Acids Res.">
        <title>Comparison of whole genome sequences of Chlamydia pneumoniae J138 from Japan and CWL029 from USA.</title>
        <authorList>
            <person name="Shirai M."/>
            <person name="Hirakawa H."/>
            <person name="Kimoto M."/>
            <person name="Tabuchi M."/>
            <person name="Kishi F."/>
            <person name="Ouchi K."/>
            <person name="Shiba T."/>
            <person name="Ishii K."/>
            <person name="Hattori M."/>
            <person name="Kuhara S."/>
            <person name="Nakazawa T."/>
        </authorList>
    </citation>
    <scope>NUCLEOTIDE SEQUENCE [LARGE SCALE GENOMIC DNA]</scope>
    <source>
        <strain>J138</strain>
    </source>
</reference>
<reference key="4">
    <citation type="submission" date="2002-05" db="EMBL/GenBank/DDBJ databases">
        <title>The genome sequence of Chlamydia pneumoniae TW183 and comparison with other Chlamydia strains based on whole genome sequence analysis.</title>
        <authorList>
            <person name="Geng M.M."/>
            <person name="Schuhmacher A."/>
            <person name="Muehldorfer I."/>
            <person name="Bensch K.W."/>
            <person name="Schaefer K.P."/>
            <person name="Schneider S."/>
            <person name="Pohl T."/>
            <person name="Essig A."/>
            <person name="Marre R."/>
            <person name="Melchers K."/>
        </authorList>
    </citation>
    <scope>NUCLEOTIDE SEQUENCE [LARGE SCALE GENOMIC DNA]</scope>
    <source>
        <strain>TW-183</strain>
    </source>
</reference>
<comment type="function">
    <text evidence="1">Negative regulator of class I heat shock genes (grpE-dnaK-dnaJ and groELS operons). Prevents heat-shock induction of these operons.</text>
</comment>
<comment type="similarity">
    <text evidence="1">Belongs to the HrcA family.</text>
</comment>
<comment type="sequence caution" evidence="2">
    <conflict type="erroneous initiation">
        <sequence resource="EMBL-CDS" id="AAF38116"/>
    </conflict>
</comment>
<comment type="sequence caution" evidence="2">
    <conflict type="erroneous initiation">
        <sequence resource="EMBL-CDS" id="AAP98450"/>
    </conflict>
</comment>
<accession>Q9Z850</accession>
<accession>Q9JQI8</accession>
<accession>Q9K2B2</accession>
<sequence length="398" mass="45156">MLSVTIVLVGLEMARSKVSKRDSKILDILFATTELYLKTGQPVGSKTLKESFCSDLSTATIRNYFAELEAEGFLKKNHTSGGRIPTDLALRHYVDHQEECPEAEISAPIFDKISQLPSESRNIIKDLQKATELLGEILDLPTFFSSPRFENDSVTNIQITQVDKQRAVTILSTEFGQIFTDTLWLPEACDTLSIKRIEKFLQNYIRKLPTNEELSKKEEHLSMSLYNEVVVRYLTRYCNFSEEDLYQTGMSKLLKYEAFKDPEVLALGLSLFENRRQMCELLNIGMHKGRATAFIGKELSDILGTSNPGCSVITIPYYMNRSPLGALGILGPINLPYKEALPLLKLFANKINETLTQSFYKFKLSFRRPLTSNCKLSNEPILRTEYSSIKLLPSKETL</sequence>
<keyword id="KW-0678">Repressor</keyword>
<keyword id="KW-0346">Stress response</keyword>
<keyword id="KW-0804">Transcription</keyword>
<keyword id="KW-0805">Transcription regulation</keyword>
<feature type="chain" id="PRO_0000182467" description="Heat-inducible transcription repressor HrcA">
    <location>
        <begin position="1"/>
        <end position="398"/>
    </location>
</feature>
<name>HRCA_CHLPN</name>
<organism>
    <name type="scientific">Chlamydia pneumoniae</name>
    <name type="common">Chlamydophila pneumoniae</name>
    <dbReference type="NCBI Taxonomy" id="83558"/>
    <lineage>
        <taxon>Bacteria</taxon>
        <taxon>Pseudomonadati</taxon>
        <taxon>Chlamydiota</taxon>
        <taxon>Chlamydiia</taxon>
        <taxon>Chlamydiales</taxon>
        <taxon>Chlamydiaceae</taxon>
        <taxon>Chlamydia/Chlamydophila group</taxon>
        <taxon>Chlamydia</taxon>
    </lineage>
</organism>
<protein>
    <recommendedName>
        <fullName evidence="1">Heat-inducible transcription repressor HrcA</fullName>
    </recommendedName>
</protein>
<proteinExistence type="inferred from homology"/>
<dbReference type="EMBL" id="AE001363">
    <property type="protein sequence ID" value="AAD18641.1"/>
    <property type="molecule type" value="Genomic_DNA"/>
</dbReference>
<dbReference type="EMBL" id="AE002161">
    <property type="protein sequence ID" value="AAF38116.1"/>
    <property type="status" value="ALT_INIT"/>
    <property type="molecule type" value="Genomic_DNA"/>
</dbReference>
<dbReference type="EMBL" id="BA000008">
    <property type="protein sequence ID" value="BAA98707.1"/>
    <property type="molecule type" value="Genomic_DNA"/>
</dbReference>
<dbReference type="EMBL" id="AE009440">
    <property type="protein sequence ID" value="AAP98450.1"/>
    <property type="status" value="ALT_INIT"/>
    <property type="molecule type" value="Genomic_DNA"/>
</dbReference>
<dbReference type="PIR" id="A86553">
    <property type="entry name" value="A86553"/>
</dbReference>
<dbReference type="PIR" id="B81598">
    <property type="entry name" value="B81598"/>
</dbReference>
<dbReference type="PIR" id="G72070">
    <property type="entry name" value="G72070"/>
</dbReference>
<dbReference type="RefSeq" id="NP_224697.1">
    <property type="nucleotide sequence ID" value="NC_000922.1"/>
</dbReference>
<dbReference type="RefSeq" id="WP_010883139.1">
    <property type="nucleotide sequence ID" value="NZ_LN847257.1"/>
</dbReference>
<dbReference type="SMR" id="Q9Z850"/>
<dbReference type="STRING" id="406984.CPK_ORF01017"/>
<dbReference type="GeneID" id="45050544"/>
<dbReference type="KEGG" id="cpa:CP_0253"/>
<dbReference type="KEGG" id="cpj:hrcA"/>
<dbReference type="KEGG" id="cpn:CPn_0501"/>
<dbReference type="KEGG" id="cpt:CpB0521"/>
<dbReference type="PATRIC" id="fig|115713.3.peg.560"/>
<dbReference type="eggNOG" id="COG1420">
    <property type="taxonomic scope" value="Bacteria"/>
</dbReference>
<dbReference type="HOGENOM" id="CLU_050019_1_0_0"/>
<dbReference type="OrthoDB" id="9783139at2"/>
<dbReference type="Proteomes" id="UP000000583">
    <property type="component" value="Chromosome"/>
</dbReference>
<dbReference type="Proteomes" id="UP000000801">
    <property type="component" value="Chromosome"/>
</dbReference>
<dbReference type="GO" id="GO:0003677">
    <property type="term" value="F:DNA binding"/>
    <property type="evidence" value="ECO:0007669"/>
    <property type="project" value="InterPro"/>
</dbReference>
<dbReference type="GO" id="GO:0045892">
    <property type="term" value="P:negative regulation of DNA-templated transcription"/>
    <property type="evidence" value="ECO:0007669"/>
    <property type="project" value="UniProtKB-UniRule"/>
</dbReference>
<dbReference type="Gene3D" id="3.30.450.40">
    <property type="match status" value="1"/>
</dbReference>
<dbReference type="Gene3D" id="1.10.10.10">
    <property type="entry name" value="Winged helix-like DNA-binding domain superfamily/Winged helix DNA-binding domain"/>
    <property type="match status" value="1"/>
</dbReference>
<dbReference type="HAMAP" id="MF_00081">
    <property type="entry name" value="HrcA"/>
    <property type="match status" value="1"/>
</dbReference>
<dbReference type="InterPro" id="IPR029016">
    <property type="entry name" value="GAF-like_dom_sf"/>
</dbReference>
<dbReference type="InterPro" id="IPR002571">
    <property type="entry name" value="HrcA"/>
</dbReference>
<dbReference type="InterPro" id="IPR021153">
    <property type="entry name" value="HrcA_C"/>
</dbReference>
<dbReference type="InterPro" id="IPR036388">
    <property type="entry name" value="WH-like_DNA-bd_sf"/>
</dbReference>
<dbReference type="InterPro" id="IPR036390">
    <property type="entry name" value="WH_DNA-bd_sf"/>
</dbReference>
<dbReference type="NCBIfam" id="TIGR00331">
    <property type="entry name" value="hrcA"/>
    <property type="match status" value="1"/>
</dbReference>
<dbReference type="PANTHER" id="PTHR34824">
    <property type="entry name" value="HEAT-INDUCIBLE TRANSCRIPTION REPRESSOR HRCA"/>
    <property type="match status" value="1"/>
</dbReference>
<dbReference type="PANTHER" id="PTHR34824:SF1">
    <property type="entry name" value="HEAT-INDUCIBLE TRANSCRIPTION REPRESSOR HRCA"/>
    <property type="match status" value="1"/>
</dbReference>
<dbReference type="Pfam" id="PF01628">
    <property type="entry name" value="HrcA"/>
    <property type="match status" value="1"/>
</dbReference>
<dbReference type="PIRSF" id="PIRSF005485">
    <property type="entry name" value="HrcA"/>
    <property type="match status" value="1"/>
</dbReference>
<dbReference type="SUPFAM" id="SSF55781">
    <property type="entry name" value="GAF domain-like"/>
    <property type="match status" value="1"/>
</dbReference>
<dbReference type="SUPFAM" id="SSF46785">
    <property type="entry name" value="Winged helix' DNA-binding domain"/>
    <property type="match status" value="1"/>
</dbReference>
<gene>
    <name evidence="1" type="primary">hrcA</name>
    <name type="ordered locus">CPn_0501</name>
    <name type="ordered locus">CP_0253</name>
    <name type="ordered locus">CpB0521</name>
</gene>